<gene>
    <name evidence="1" type="primary">queC</name>
    <name type="ordered locus">SAOUHSC_00721</name>
</gene>
<sequence>MESVLNNEKAIVVFSGGQDSTTCLFYAKKHFKEVELVTFNYGQRHDTEIEVAKQIAQDQGMKHHVLDMSLLSQLTPNALTQHDMEITNNEDGIPNTFVPARNLLFLSFAGALAYQIGAKHIITGVCETDFSGYPDCRDSFIKSMNVTLSLAMDKDFVIHTPLMWLNKAETWKLSDELEVLDYIRTKTLTCYNGIIGDGCGECPACHLRQRGLNQYLESKGAL</sequence>
<dbReference type="EC" id="6.3.4.20" evidence="1"/>
<dbReference type="EMBL" id="CP000253">
    <property type="protein sequence ID" value="ABD29854.1"/>
    <property type="molecule type" value="Genomic_DNA"/>
</dbReference>
<dbReference type="RefSeq" id="WP_000446724.1">
    <property type="nucleotide sequence ID" value="NZ_LS483365.1"/>
</dbReference>
<dbReference type="RefSeq" id="YP_499280.1">
    <property type="nucleotide sequence ID" value="NC_007795.1"/>
</dbReference>
<dbReference type="SMR" id="Q2G1X6"/>
<dbReference type="STRING" id="93061.SAOUHSC_00721"/>
<dbReference type="PaxDb" id="1280-SAXN108_0780"/>
<dbReference type="GeneID" id="3919348"/>
<dbReference type="KEGG" id="sao:SAOUHSC_00721"/>
<dbReference type="PATRIC" id="fig|93061.5.peg.650"/>
<dbReference type="eggNOG" id="COG0603">
    <property type="taxonomic scope" value="Bacteria"/>
</dbReference>
<dbReference type="HOGENOM" id="CLU_081854_0_0_9"/>
<dbReference type="OrthoDB" id="9789567at2"/>
<dbReference type="UniPathway" id="UPA00391"/>
<dbReference type="PRO" id="PR:Q2G1X6"/>
<dbReference type="Proteomes" id="UP000008816">
    <property type="component" value="Chromosome"/>
</dbReference>
<dbReference type="GO" id="GO:0005524">
    <property type="term" value="F:ATP binding"/>
    <property type="evidence" value="ECO:0007669"/>
    <property type="project" value="UniProtKB-UniRule"/>
</dbReference>
<dbReference type="GO" id="GO:0016879">
    <property type="term" value="F:ligase activity, forming carbon-nitrogen bonds"/>
    <property type="evidence" value="ECO:0007669"/>
    <property type="project" value="UniProtKB-UniRule"/>
</dbReference>
<dbReference type="GO" id="GO:0008270">
    <property type="term" value="F:zinc ion binding"/>
    <property type="evidence" value="ECO:0007669"/>
    <property type="project" value="UniProtKB-UniRule"/>
</dbReference>
<dbReference type="GO" id="GO:0008616">
    <property type="term" value="P:queuosine biosynthetic process"/>
    <property type="evidence" value="ECO:0007669"/>
    <property type="project" value="UniProtKB-UniRule"/>
</dbReference>
<dbReference type="CDD" id="cd01995">
    <property type="entry name" value="QueC-like"/>
    <property type="match status" value="1"/>
</dbReference>
<dbReference type="FunFam" id="3.40.50.620:FF:000017">
    <property type="entry name" value="7-cyano-7-deazaguanine synthase"/>
    <property type="match status" value="1"/>
</dbReference>
<dbReference type="Gene3D" id="3.40.50.620">
    <property type="entry name" value="HUPs"/>
    <property type="match status" value="1"/>
</dbReference>
<dbReference type="HAMAP" id="MF_01633">
    <property type="entry name" value="QueC"/>
    <property type="match status" value="1"/>
</dbReference>
<dbReference type="InterPro" id="IPR018317">
    <property type="entry name" value="QueC"/>
</dbReference>
<dbReference type="InterPro" id="IPR014729">
    <property type="entry name" value="Rossmann-like_a/b/a_fold"/>
</dbReference>
<dbReference type="NCBIfam" id="TIGR00364">
    <property type="entry name" value="7-cyano-7-deazaguanine synthase QueC"/>
    <property type="match status" value="1"/>
</dbReference>
<dbReference type="PANTHER" id="PTHR42914">
    <property type="entry name" value="7-CYANO-7-DEAZAGUANINE SYNTHASE"/>
    <property type="match status" value="1"/>
</dbReference>
<dbReference type="PANTHER" id="PTHR42914:SF1">
    <property type="entry name" value="7-CYANO-7-DEAZAGUANINE SYNTHASE"/>
    <property type="match status" value="1"/>
</dbReference>
<dbReference type="Pfam" id="PF06508">
    <property type="entry name" value="QueC"/>
    <property type="match status" value="1"/>
</dbReference>
<dbReference type="PIRSF" id="PIRSF006293">
    <property type="entry name" value="ExsB"/>
    <property type="match status" value="1"/>
</dbReference>
<dbReference type="SUPFAM" id="SSF52402">
    <property type="entry name" value="Adenine nucleotide alpha hydrolases-like"/>
    <property type="match status" value="1"/>
</dbReference>
<keyword id="KW-0067">ATP-binding</keyword>
<keyword id="KW-0436">Ligase</keyword>
<keyword id="KW-0479">Metal-binding</keyword>
<keyword id="KW-0547">Nucleotide-binding</keyword>
<keyword id="KW-0671">Queuosine biosynthesis</keyword>
<keyword id="KW-1185">Reference proteome</keyword>
<keyword id="KW-0862">Zinc</keyword>
<protein>
    <recommendedName>
        <fullName evidence="1">7-cyano-7-deazaguanine synthase</fullName>
        <ecNumber evidence="1">6.3.4.20</ecNumber>
    </recommendedName>
    <alternativeName>
        <fullName evidence="1">7-cyano-7-carbaguanine synthase</fullName>
    </alternativeName>
    <alternativeName>
        <fullName evidence="1">PreQ(0) synthase</fullName>
    </alternativeName>
    <alternativeName>
        <fullName evidence="1">Queuosine biosynthesis protein QueC</fullName>
    </alternativeName>
</protein>
<reference key="1">
    <citation type="book" date="2006" name="Gram positive pathogens, 2nd edition">
        <title>The Staphylococcus aureus NCTC 8325 genome.</title>
        <editorList>
            <person name="Fischetti V."/>
            <person name="Novick R."/>
            <person name="Ferretti J."/>
            <person name="Portnoy D."/>
            <person name="Rood J."/>
        </editorList>
        <authorList>
            <person name="Gillaspy A.F."/>
            <person name="Worrell V."/>
            <person name="Orvis J."/>
            <person name="Roe B.A."/>
            <person name="Dyer D.W."/>
            <person name="Iandolo J.J."/>
        </authorList>
    </citation>
    <scope>NUCLEOTIDE SEQUENCE [LARGE SCALE GENOMIC DNA]</scope>
    <source>
        <strain>NCTC 8325 / PS 47</strain>
    </source>
</reference>
<proteinExistence type="inferred from homology"/>
<comment type="function">
    <text evidence="1">Catalyzes the ATP-dependent conversion of 7-carboxy-7-deazaguanine (CDG) to 7-cyano-7-deazaguanine (preQ(0)).</text>
</comment>
<comment type="catalytic activity">
    <reaction evidence="1">
        <text>7-carboxy-7-deazaguanine + NH4(+) + ATP = 7-cyano-7-deazaguanine + ADP + phosphate + H2O + H(+)</text>
        <dbReference type="Rhea" id="RHEA:27982"/>
        <dbReference type="ChEBI" id="CHEBI:15377"/>
        <dbReference type="ChEBI" id="CHEBI:15378"/>
        <dbReference type="ChEBI" id="CHEBI:28938"/>
        <dbReference type="ChEBI" id="CHEBI:30616"/>
        <dbReference type="ChEBI" id="CHEBI:43474"/>
        <dbReference type="ChEBI" id="CHEBI:45075"/>
        <dbReference type="ChEBI" id="CHEBI:61036"/>
        <dbReference type="ChEBI" id="CHEBI:456216"/>
        <dbReference type="EC" id="6.3.4.20"/>
    </reaction>
</comment>
<comment type="cofactor">
    <cofactor evidence="1">
        <name>Zn(2+)</name>
        <dbReference type="ChEBI" id="CHEBI:29105"/>
    </cofactor>
    <text evidence="1">Binds 1 zinc ion per subunit.</text>
</comment>
<comment type="pathway">
    <text evidence="1">Purine metabolism; 7-cyano-7-deazaguanine biosynthesis.</text>
</comment>
<comment type="subunit">
    <text evidence="1">Homodimer.</text>
</comment>
<comment type="similarity">
    <text evidence="1">Belongs to the QueC family.</text>
</comment>
<evidence type="ECO:0000255" key="1">
    <source>
        <dbReference type="HAMAP-Rule" id="MF_01633"/>
    </source>
</evidence>
<feature type="chain" id="PRO_0000246935" description="7-cyano-7-deazaguanine synthase">
    <location>
        <begin position="1"/>
        <end position="222"/>
    </location>
</feature>
<feature type="binding site" evidence="1">
    <location>
        <begin position="14"/>
        <end position="24"/>
    </location>
    <ligand>
        <name>ATP</name>
        <dbReference type="ChEBI" id="CHEBI:30616"/>
    </ligand>
</feature>
<feature type="binding site" evidence="1">
    <location>
        <position position="190"/>
    </location>
    <ligand>
        <name>Zn(2+)</name>
        <dbReference type="ChEBI" id="CHEBI:29105"/>
    </ligand>
</feature>
<feature type="binding site" evidence="1">
    <location>
        <position position="199"/>
    </location>
    <ligand>
        <name>Zn(2+)</name>
        <dbReference type="ChEBI" id="CHEBI:29105"/>
    </ligand>
</feature>
<feature type="binding site" evidence="1">
    <location>
        <position position="202"/>
    </location>
    <ligand>
        <name>Zn(2+)</name>
        <dbReference type="ChEBI" id="CHEBI:29105"/>
    </ligand>
</feature>
<feature type="binding site" evidence="1">
    <location>
        <position position="205"/>
    </location>
    <ligand>
        <name>Zn(2+)</name>
        <dbReference type="ChEBI" id="CHEBI:29105"/>
    </ligand>
</feature>
<accession>Q2G1X6</accession>
<organism>
    <name type="scientific">Staphylococcus aureus (strain NCTC 8325 / PS 47)</name>
    <dbReference type="NCBI Taxonomy" id="93061"/>
    <lineage>
        <taxon>Bacteria</taxon>
        <taxon>Bacillati</taxon>
        <taxon>Bacillota</taxon>
        <taxon>Bacilli</taxon>
        <taxon>Bacillales</taxon>
        <taxon>Staphylococcaceae</taxon>
        <taxon>Staphylococcus</taxon>
    </lineage>
</organism>
<name>QUEC_STAA8</name>